<keyword id="KW-0067">ATP-binding</keyword>
<keyword id="KW-0963">Cytoplasm</keyword>
<keyword id="KW-0206">Cytoskeleton</keyword>
<keyword id="KW-0378">Hydrolase</keyword>
<keyword id="KW-0547">Nucleotide-binding</keyword>
<accession>P41113</accession>
<reference key="1">
    <citation type="journal article" date="1993" name="Gene">
        <title>Actin-encoding genes of the hydrozoan Podocoryne carnea.</title>
        <authorList>
            <person name="Aerne B.L."/>
            <person name="Schmid V."/>
            <person name="Schuchert P."/>
        </authorList>
    </citation>
    <scope>NUCLEOTIDE SEQUENCE [GENOMIC DNA]</scope>
</reference>
<gene>
    <name type="primary">ACT3</name>
</gene>
<feature type="chain" id="PRO_0000088998" description="Actin-3">
    <location>
        <begin position="1"/>
        <end position="376"/>
    </location>
</feature>
<comment type="function">
    <text>Actins are highly conserved proteins that are involved in various types of cell motility and are ubiquitously expressed in all eukaryotic cells.</text>
</comment>
<comment type="catalytic activity">
    <reaction evidence="1">
        <text>ATP + H2O = ADP + phosphate + H(+)</text>
        <dbReference type="Rhea" id="RHEA:13065"/>
        <dbReference type="ChEBI" id="CHEBI:15377"/>
        <dbReference type="ChEBI" id="CHEBI:15378"/>
        <dbReference type="ChEBI" id="CHEBI:30616"/>
        <dbReference type="ChEBI" id="CHEBI:43474"/>
        <dbReference type="ChEBI" id="CHEBI:456216"/>
    </reaction>
</comment>
<comment type="subcellular location">
    <subcellularLocation>
        <location>Cytoplasm</location>
        <location>Cytoskeleton</location>
    </subcellularLocation>
</comment>
<comment type="miscellaneous">
    <text>There are at least six actin genes in Podocoryne carnea.</text>
</comment>
<comment type="similarity">
    <text evidence="2">Belongs to the actin family.</text>
</comment>
<protein>
    <recommendedName>
        <fullName>Actin-3</fullName>
        <ecNumber evidence="1">3.6.4.-</ecNumber>
    </recommendedName>
</protein>
<evidence type="ECO:0000250" key="1">
    <source>
        <dbReference type="UniProtKB" id="P68137"/>
    </source>
</evidence>
<evidence type="ECO:0000305" key="2"/>
<dbReference type="EC" id="3.6.4.-" evidence="1"/>
<dbReference type="EMBL" id="X69060">
    <property type="protein sequence ID" value="CAA48798.1"/>
    <property type="molecule type" value="Genomic_DNA"/>
</dbReference>
<dbReference type="PIR" id="JN0832">
    <property type="entry name" value="JN0832"/>
</dbReference>
<dbReference type="SMR" id="P41113"/>
<dbReference type="GO" id="GO:0005737">
    <property type="term" value="C:cytoplasm"/>
    <property type="evidence" value="ECO:0007669"/>
    <property type="project" value="UniProtKB-KW"/>
</dbReference>
<dbReference type="GO" id="GO:0005856">
    <property type="term" value="C:cytoskeleton"/>
    <property type="evidence" value="ECO:0007669"/>
    <property type="project" value="UniProtKB-SubCell"/>
</dbReference>
<dbReference type="GO" id="GO:0005524">
    <property type="term" value="F:ATP binding"/>
    <property type="evidence" value="ECO:0007669"/>
    <property type="project" value="UniProtKB-KW"/>
</dbReference>
<dbReference type="GO" id="GO:0016787">
    <property type="term" value="F:hydrolase activity"/>
    <property type="evidence" value="ECO:0007669"/>
    <property type="project" value="UniProtKB-KW"/>
</dbReference>
<dbReference type="CDD" id="cd10224">
    <property type="entry name" value="ASKHA_NBD_actin"/>
    <property type="match status" value="1"/>
</dbReference>
<dbReference type="FunFam" id="3.30.420.40:FF:000131">
    <property type="entry name" value="Actin, alpha skeletal muscle"/>
    <property type="match status" value="1"/>
</dbReference>
<dbReference type="FunFam" id="3.30.420.40:FF:000291">
    <property type="entry name" value="Actin, alpha skeletal muscle"/>
    <property type="match status" value="1"/>
</dbReference>
<dbReference type="FunFam" id="3.90.640.10:FF:000047">
    <property type="entry name" value="Actin, alpha skeletal muscle"/>
    <property type="match status" value="1"/>
</dbReference>
<dbReference type="FunFam" id="3.30.420.40:FF:000058">
    <property type="entry name" value="Putative actin-related protein 5"/>
    <property type="match status" value="1"/>
</dbReference>
<dbReference type="Gene3D" id="3.30.420.40">
    <property type="match status" value="2"/>
</dbReference>
<dbReference type="Gene3D" id="3.90.640.10">
    <property type="entry name" value="Actin, Chain A, domain 4"/>
    <property type="match status" value="1"/>
</dbReference>
<dbReference type="InterPro" id="IPR004000">
    <property type="entry name" value="Actin"/>
</dbReference>
<dbReference type="InterPro" id="IPR020902">
    <property type="entry name" value="Actin/actin-like_CS"/>
</dbReference>
<dbReference type="InterPro" id="IPR004001">
    <property type="entry name" value="Actin_CS"/>
</dbReference>
<dbReference type="InterPro" id="IPR043129">
    <property type="entry name" value="ATPase_NBD"/>
</dbReference>
<dbReference type="PANTHER" id="PTHR11937">
    <property type="entry name" value="ACTIN"/>
    <property type="match status" value="1"/>
</dbReference>
<dbReference type="Pfam" id="PF00022">
    <property type="entry name" value="Actin"/>
    <property type="match status" value="1"/>
</dbReference>
<dbReference type="PRINTS" id="PR00190">
    <property type="entry name" value="ACTIN"/>
</dbReference>
<dbReference type="SMART" id="SM00268">
    <property type="entry name" value="ACTIN"/>
    <property type="match status" value="1"/>
</dbReference>
<dbReference type="SUPFAM" id="SSF53067">
    <property type="entry name" value="Actin-like ATPase domain"/>
    <property type="match status" value="2"/>
</dbReference>
<dbReference type="PROSITE" id="PS00406">
    <property type="entry name" value="ACTINS_1"/>
    <property type="match status" value="1"/>
</dbReference>
<dbReference type="PROSITE" id="PS00432">
    <property type="entry name" value="ACTINS_2"/>
    <property type="match status" value="1"/>
</dbReference>
<dbReference type="PROSITE" id="PS01132">
    <property type="entry name" value="ACTINS_ACT_LIKE"/>
    <property type="match status" value="1"/>
</dbReference>
<proteinExistence type="inferred from homology"/>
<name>ACT3_PODCA</name>
<sequence length="376" mass="41827">MADDDVAALVVDNGSGMCKAGFAGDDAPRAVFPSIVGRPRHQGVMVGMGQKDSYVGDEAQSKRGILTLKYPIEHGIVTNWDDMEKIWHHTFYNELRVAPEEHPVLLTEAPLNPKANREKMTQIMFETFNSPAMYVAIQAVLSLYASGRTTGIVLDSGDGVSHTVPIYEGYALPHAIIRLDLAGRDLTDYMMKILTERGYSFTTTAEREIVRDIKEKLAYVALDFEQEMQTAVTSSSLEKSYELPDGQVITIGNERFRCPETLFQPAFIGMESAGIHETTYNSIMKCDVDIRKDLYANTVLSGGTTMFPGIADRMQKEISSLAPPTMKIKIIAPPERKYSVWIGGSILASLSTFQQMWISKQEYDESGPSIVHRKCF</sequence>
<organism>
    <name type="scientific">Podocoryna carnea</name>
    <name type="common">Hydrozoan</name>
    <dbReference type="NCBI Taxonomy" id="6096"/>
    <lineage>
        <taxon>Eukaryota</taxon>
        <taxon>Metazoa</taxon>
        <taxon>Cnidaria</taxon>
        <taxon>Hydrozoa</taxon>
        <taxon>Hydroidolina</taxon>
        <taxon>Anthoathecata</taxon>
        <taxon>Filifera</taxon>
        <taxon>Hydractiniidae</taxon>
        <taxon>Podocoryna</taxon>
    </lineage>
</organism>